<evidence type="ECO:0000255" key="1">
    <source>
        <dbReference type="HAMAP-Rule" id="MF_00262"/>
    </source>
</evidence>
<protein>
    <recommendedName>
        <fullName evidence="1">Cell division topological specificity factor</fullName>
    </recommendedName>
</protein>
<gene>
    <name evidence="1" type="primary">minE</name>
    <name type="ordered locus">FTA_0547</name>
</gene>
<reference key="1">
    <citation type="journal article" date="2009" name="PLoS ONE">
        <title>Complete genome sequence of Francisella tularensis subspecies holarctica FTNF002-00.</title>
        <authorList>
            <person name="Barabote R.D."/>
            <person name="Xie G."/>
            <person name="Brettin T.S."/>
            <person name="Hinrichs S.H."/>
            <person name="Fey P.D."/>
            <person name="Jay J.J."/>
            <person name="Engle J.L."/>
            <person name="Godbole S.D."/>
            <person name="Noronha J.M."/>
            <person name="Scheuermann R.H."/>
            <person name="Zhou L.W."/>
            <person name="Lion C."/>
            <person name="Dempsey M.P."/>
        </authorList>
    </citation>
    <scope>NUCLEOTIDE SEQUENCE [LARGE SCALE GENOMIC DNA]</scope>
    <source>
        <strain>FTNF002-00 / FTA</strain>
    </source>
</reference>
<keyword id="KW-0131">Cell cycle</keyword>
<keyword id="KW-0132">Cell division</keyword>
<dbReference type="EMBL" id="CP000803">
    <property type="protein sequence ID" value="ABU61023.1"/>
    <property type="molecule type" value="Genomic_DNA"/>
</dbReference>
<dbReference type="RefSeq" id="WP_003014812.1">
    <property type="nucleotide sequence ID" value="NC_009749.1"/>
</dbReference>
<dbReference type="GeneID" id="75264169"/>
<dbReference type="KEGG" id="fta:FTA_0547"/>
<dbReference type="HOGENOM" id="CLU_137929_2_2_6"/>
<dbReference type="GO" id="GO:0051301">
    <property type="term" value="P:cell division"/>
    <property type="evidence" value="ECO:0007669"/>
    <property type="project" value="UniProtKB-KW"/>
</dbReference>
<dbReference type="GO" id="GO:0032955">
    <property type="term" value="P:regulation of division septum assembly"/>
    <property type="evidence" value="ECO:0007669"/>
    <property type="project" value="InterPro"/>
</dbReference>
<dbReference type="Gene3D" id="3.30.1070.10">
    <property type="entry name" value="Cell division topological specificity factor MinE"/>
    <property type="match status" value="1"/>
</dbReference>
<dbReference type="HAMAP" id="MF_00262">
    <property type="entry name" value="MinE"/>
    <property type="match status" value="1"/>
</dbReference>
<dbReference type="InterPro" id="IPR005527">
    <property type="entry name" value="MinE"/>
</dbReference>
<dbReference type="InterPro" id="IPR036707">
    <property type="entry name" value="MinE_sf"/>
</dbReference>
<dbReference type="NCBIfam" id="TIGR01215">
    <property type="entry name" value="minE"/>
    <property type="match status" value="1"/>
</dbReference>
<dbReference type="NCBIfam" id="NF001422">
    <property type="entry name" value="PRK00296.1"/>
    <property type="match status" value="1"/>
</dbReference>
<dbReference type="Pfam" id="PF03776">
    <property type="entry name" value="MinE"/>
    <property type="match status" value="1"/>
</dbReference>
<dbReference type="SUPFAM" id="SSF55229">
    <property type="entry name" value="Cell division protein MinE topological specificity domain"/>
    <property type="match status" value="1"/>
</dbReference>
<comment type="function">
    <text evidence="1">Prevents the cell division inhibition by proteins MinC and MinD at internal division sites while permitting inhibition at polar sites. This ensures cell division at the proper site by restricting the formation of a division septum at the midpoint of the long axis of the cell.</text>
</comment>
<comment type="similarity">
    <text evidence="1">Belongs to the MinE family.</text>
</comment>
<name>MINE_FRATF</name>
<sequence>MLAKLFGLSKKQQSASVAKERLQIIVAHQRSELHPRSSKISSHLLAELKDEIIEVVKKYVALSEENIRDIDLKVEDSSKNSTIEVNIPFN</sequence>
<organism>
    <name type="scientific">Francisella tularensis subsp. holarctica (strain FTNF002-00 / FTA)</name>
    <dbReference type="NCBI Taxonomy" id="458234"/>
    <lineage>
        <taxon>Bacteria</taxon>
        <taxon>Pseudomonadati</taxon>
        <taxon>Pseudomonadota</taxon>
        <taxon>Gammaproteobacteria</taxon>
        <taxon>Thiotrichales</taxon>
        <taxon>Francisellaceae</taxon>
        <taxon>Francisella</taxon>
    </lineage>
</organism>
<feature type="chain" id="PRO_1000047784" description="Cell division topological specificity factor">
    <location>
        <begin position="1"/>
        <end position="90"/>
    </location>
</feature>
<accession>A7NAM0</accession>
<proteinExistence type="inferred from homology"/>